<accession>Q1JDD1</accession>
<feature type="chain" id="PRO_1000069980" description="Segregation and condensation protein A">
    <location>
        <begin position="1"/>
        <end position="234"/>
    </location>
</feature>
<dbReference type="EMBL" id="CP000261">
    <property type="protein sequence ID" value="ABF35377.1"/>
    <property type="molecule type" value="Genomic_DNA"/>
</dbReference>
<dbReference type="SMR" id="Q1JDD1"/>
<dbReference type="KEGG" id="spj:MGAS2096_Spy0325"/>
<dbReference type="HOGENOM" id="CLU_038686_3_3_9"/>
<dbReference type="GO" id="GO:0005737">
    <property type="term" value="C:cytoplasm"/>
    <property type="evidence" value="ECO:0007669"/>
    <property type="project" value="UniProtKB-SubCell"/>
</dbReference>
<dbReference type="GO" id="GO:0051301">
    <property type="term" value="P:cell division"/>
    <property type="evidence" value="ECO:0007669"/>
    <property type="project" value="UniProtKB-KW"/>
</dbReference>
<dbReference type="GO" id="GO:0007059">
    <property type="term" value="P:chromosome segregation"/>
    <property type="evidence" value="ECO:0007669"/>
    <property type="project" value="UniProtKB-UniRule"/>
</dbReference>
<dbReference type="GO" id="GO:0006260">
    <property type="term" value="P:DNA replication"/>
    <property type="evidence" value="ECO:0007669"/>
    <property type="project" value="UniProtKB-UniRule"/>
</dbReference>
<dbReference type="Gene3D" id="6.10.250.2410">
    <property type="match status" value="1"/>
</dbReference>
<dbReference type="HAMAP" id="MF_01805">
    <property type="entry name" value="ScpA"/>
    <property type="match status" value="1"/>
</dbReference>
<dbReference type="InterPro" id="IPR003768">
    <property type="entry name" value="ScpA"/>
</dbReference>
<dbReference type="NCBIfam" id="NF000993">
    <property type="entry name" value="PRK00104.1-2"/>
    <property type="match status" value="1"/>
</dbReference>
<dbReference type="PANTHER" id="PTHR33969">
    <property type="entry name" value="SEGREGATION AND CONDENSATION PROTEIN A"/>
    <property type="match status" value="1"/>
</dbReference>
<dbReference type="PANTHER" id="PTHR33969:SF2">
    <property type="entry name" value="SEGREGATION AND CONDENSATION PROTEIN A"/>
    <property type="match status" value="1"/>
</dbReference>
<dbReference type="Pfam" id="PF02616">
    <property type="entry name" value="SMC_ScpA"/>
    <property type="match status" value="1"/>
</dbReference>
<evidence type="ECO:0000255" key="1">
    <source>
        <dbReference type="HAMAP-Rule" id="MF_01805"/>
    </source>
</evidence>
<protein>
    <recommendedName>
        <fullName evidence="1">Segregation and condensation protein A</fullName>
    </recommendedName>
</protein>
<keyword id="KW-0131">Cell cycle</keyword>
<keyword id="KW-0132">Cell division</keyword>
<keyword id="KW-0159">Chromosome partition</keyword>
<keyword id="KW-0963">Cytoplasm</keyword>
<reference key="1">
    <citation type="journal article" date="2006" name="Proc. Natl. Acad. Sci. U.S.A.">
        <title>Molecular genetic anatomy of inter- and intraserotype variation in the human bacterial pathogen group A Streptococcus.</title>
        <authorList>
            <person name="Beres S.B."/>
            <person name="Richter E.W."/>
            <person name="Nagiec M.J."/>
            <person name="Sumby P."/>
            <person name="Porcella S.F."/>
            <person name="DeLeo F.R."/>
            <person name="Musser J.M."/>
        </authorList>
    </citation>
    <scope>NUCLEOTIDE SEQUENCE [LARGE SCALE GENOMIC DNA]</scope>
    <source>
        <strain>MGAS2096</strain>
    </source>
</reference>
<comment type="function">
    <text evidence="1">Participates in chromosomal partition during cell division. May act via the formation of a condensin-like complex containing Smc and ScpB that pull DNA away from mid-cell into both cell halves.</text>
</comment>
<comment type="subunit">
    <text evidence="1">Component of a cohesin-like complex composed of ScpA, ScpB and the Smc homodimer, in which ScpA and ScpB bind to the head domain of Smc. The presence of the three proteins is required for the association of the complex with DNA.</text>
</comment>
<comment type="subcellular location">
    <subcellularLocation>
        <location evidence="1">Cytoplasm</location>
    </subcellularLocation>
    <text evidence="1">Associated with two foci at the outer edges of the nucleoid region in young cells, and at four foci within both cell halves in older cells.</text>
</comment>
<comment type="similarity">
    <text evidence="1">Belongs to the ScpA family.</text>
</comment>
<sequence>MDIKLKDFEGPLDLLLHLVSQYKVDIYEVPIVEVIEQYLNYIETLQVMKLEVAGDYMLMASQLMLIKSRRLLPKVVEHIEEEDLEQDLLEKIEEYSRFKAVSQALAKQHDQRAKWYSKPKQELIFEDAILQEDKTVMDLFLAFSNIMAAKRAVLKTNHTVIERDDYKIEDMMASIKQRLEKENVISLSAIFEECQTLNEVISIFLASLELIKLHVVFVEQLSNFGAIILRKEKK</sequence>
<name>SCPA_STRPB</name>
<organism>
    <name type="scientific">Streptococcus pyogenes serotype M12 (strain MGAS2096)</name>
    <dbReference type="NCBI Taxonomy" id="370553"/>
    <lineage>
        <taxon>Bacteria</taxon>
        <taxon>Bacillati</taxon>
        <taxon>Bacillota</taxon>
        <taxon>Bacilli</taxon>
        <taxon>Lactobacillales</taxon>
        <taxon>Streptococcaceae</taxon>
        <taxon>Streptococcus</taxon>
    </lineage>
</organism>
<gene>
    <name evidence="1" type="primary">scpA</name>
    <name type="ordered locus">MGAS2096_Spy0325</name>
</gene>
<proteinExistence type="inferred from homology"/>